<reference key="1">
    <citation type="journal article" date="2000" name="Proc. Natl. Acad. Sci. U.S.A.">
        <title>Genome sequence of Halobacterium species NRC-1.</title>
        <authorList>
            <person name="Ng W.V."/>
            <person name="Kennedy S.P."/>
            <person name="Mahairas G.G."/>
            <person name="Berquist B."/>
            <person name="Pan M."/>
            <person name="Shukla H.D."/>
            <person name="Lasky S.R."/>
            <person name="Baliga N.S."/>
            <person name="Thorsson V."/>
            <person name="Sbrogna J."/>
            <person name="Swartzell S."/>
            <person name="Weir D."/>
            <person name="Hall J."/>
            <person name="Dahl T.A."/>
            <person name="Welti R."/>
            <person name="Goo Y.A."/>
            <person name="Leithauser B."/>
            <person name="Keller K."/>
            <person name="Cruz R."/>
            <person name="Danson M.J."/>
            <person name="Hough D.W."/>
            <person name="Maddocks D.G."/>
            <person name="Jablonski P.E."/>
            <person name="Krebs M.P."/>
            <person name="Angevine C.M."/>
            <person name="Dale H."/>
            <person name="Isenbarger T.A."/>
            <person name="Peck R.F."/>
            <person name="Pohlschroder M."/>
            <person name="Spudich J.L."/>
            <person name="Jung K.-H."/>
            <person name="Alam M."/>
            <person name="Freitas T."/>
            <person name="Hou S."/>
            <person name="Daniels C.J."/>
            <person name="Dennis P.P."/>
            <person name="Omer A.D."/>
            <person name="Ebhardt H."/>
            <person name="Lowe T.M."/>
            <person name="Liang P."/>
            <person name="Riley M."/>
            <person name="Hood L."/>
            <person name="DasSarma S."/>
        </authorList>
    </citation>
    <scope>NUCLEOTIDE SEQUENCE [LARGE SCALE GENOMIC DNA]</scope>
    <source>
        <strain>ATCC 700922 / JCM 11081 / NRC-1</strain>
    </source>
</reference>
<accession>Q9HQT4</accession>
<feature type="chain" id="PRO_0000173969" description="DNA polymerase IV">
    <location>
        <begin position="1"/>
        <end position="411"/>
    </location>
</feature>
<feature type="domain" description="UmuC" evidence="1">
    <location>
        <begin position="18"/>
        <end position="211"/>
    </location>
</feature>
<feature type="region of interest" description="Disordered" evidence="2">
    <location>
        <begin position="248"/>
        <end position="280"/>
    </location>
</feature>
<feature type="region of interest" description="Disordered" evidence="2">
    <location>
        <begin position="376"/>
        <end position="411"/>
    </location>
</feature>
<feature type="compositionally biased region" description="Basic and acidic residues" evidence="2">
    <location>
        <begin position="253"/>
        <end position="274"/>
    </location>
</feature>
<feature type="compositionally biased region" description="Gly residues" evidence="2">
    <location>
        <begin position="384"/>
        <end position="402"/>
    </location>
</feature>
<feature type="active site" evidence="1">
    <location>
        <position position="131"/>
    </location>
</feature>
<feature type="binding site" evidence="1">
    <location>
        <position position="22"/>
    </location>
    <ligand>
        <name>Mg(2+)</name>
        <dbReference type="ChEBI" id="CHEBI:18420"/>
    </ligand>
</feature>
<feature type="binding site" evidence="1">
    <location>
        <position position="130"/>
    </location>
    <ligand>
        <name>Mg(2+)</name>
        <dbReference type="ChEBI" id="CHEBI:18420"/>
    </ligand>
</feature>
<feature type="site" description="Substrate discrimination" evidence="1">
    <location>
        <position position="27"/>
    </location>
</feature>
<dbReference type="EC" id="2.7.7.7" evidence="1"/>
<dbReference type="EMBL" id="AE004437">
    <property type="protein sequence ID" value="AAG19429.1"/>
    <property type="status" value="ALT_INIT"/>
    <property type="molecule type" value="Genomic_DNA"/>
</dbReference>
<dbReference type="PIR" id="A84258">
    <property type="entry name" value="A84258"/>
</dbReference>
<dbReference type="RefSeq" id="WP_012289265.1">
    <property type="nucleotide sequence ID" value="NC_002607.1"/>
</dbReference>
<dbReference type="SMR" id="Q9HQT4"/>
<dbReference type="STRING" id="64091.VNG_1014G"/>
<dbReference type="PaxDb" id="64091-VNG_1014G"/>
<dbReference type="GeneID" id="5953908"/>
<dbReference type="KEGG" id="hal:VNG_1014G"/>
<dbReference type="PATRIC" id="fig|64091.14.peg.776"/>
<dbReference type="HOGENOM" id="CLU_012348_1_2_2"/>
<dbReference type="InParanoid" id="Q9HQT4"/>
<dbReference type="OrthoDB" id="372207at2157"/>
<dbReference type="PhylomeDB" id="Q9HQT4"/>
<dbReference type="Proteomes" id="UP000000554">
    <property type="component" value="Chromosome"/>
</dbReference>
<dbReference type="GO" id="GO:0005737">
    <property type="term" value="C:cytoplasm"/>
    <property type="evidence" value="ECO:0007669"/>
    <property type="project" value="UniProtKB-SubCell"/>
</dbReference>
<dbReference type="GO" id="GO:0003684">
    <property type="term" value="F:damaged DNA binding"/>
    <property type="evidence" value="ECO:0007669"/>
    <property type="project" value="InterPro"/>
</dbReference>
<dbReference type="GO" id="GO:0003887">
    <property type="term" value="F:DNA-directed DNA polymerase activity"/>
    <property type="evidence" value="ECO:0000318"/>
    <property type="project" value="GO_Central"/>
</dbReference>
<dbReference type="GO" id="GO:0000287">
    <property type="term" value="F:magnesium ion binding"/>
    <property type="evidence" value="ECO:0007669"/>
    <property type="project" value="UniProtKB-UniRule"/>
</dbReference>
<dbReference type="GO" id="GO:0006261">
    <property type="term" value="P:DNA-templated DNA replication"/>
    <property type="evidence" value="ECO:0007669"/>
    <property type="project" value="UniProtKB-UniRule"/>
</dbReference>
<dbReference type="GO" id="GO:0042276">
    <property type="term" value="P:error-prone translesion synthesis"/>
    <property type="evidence" value="ECO:0000318"/>
    <property type="project" value="GO_Central"/>
</dbReference>
<dbReference type="CDD" id="cd03586">
    <property type="entry name" value="PolY_Pol_IV_kappa"/>
    <property type="match status" value="1"/>
</dbReference>
<dbReference type="Gene3D" id="3.30.70.270">
    <property type="match status" value="1"/>
</dbReference>
<dbReference type="Gene3D" id="3.40.1170.60">
    <property type="match status" value="1"/>
</dbReference>
<dbReference type="Gene3D" id="1.10.150.20">
    <property type="entry name" value="5' to 3' exonuclease, C-terminal subdomain"/>
    <property type="match status" value="1"/>
</dbReference>
<dbReference type="Gene3D" id="3.30.1490.100">
    <property type="entry name" value="DNA polymerase, Y-family, little finger domain"/>
    <property type="match status" value="1"/>
</dbReference>
<dbReference type="HAMAP" id="MF_01113">
    <property type="entry name" value="DNApol_IV"/>
    <property type="match status" value="1"/>
</dbReference>
<dbReference type="InterPro" id="IPR043502">
    <property type="entry name" value="DNA/RNA_pol_sf"/>
</dbReference>
<dbReference type="InterPro" id="IPR036775">
    <property type="entry name" value="DNA_pol_Y-fam_lit_finger_sf"/>
</dbReference>
<dbReference type="InterPro" id="IPR017961">
    <property type="entry name" value="DNA_pol_Y-fam_little_finger"/>
</dbReference>
<dbReference type="InterPro" id="IPR050116">
    <property type="entry name" value="DNA_polymerase-Y"/>
</dbReference>
<dbReference type="InterPro" id="IPR022880">
    <property type="entry name" value="DNApol_IV"/>
</dbReference>
<dbReference type="InterPro" id="IPR024728">
    <property type="entry name" value="PolY_HhH_motif"/>
</dbReference>
<dbReference type="InterPro" id="IPR043128">
    <property type="entry name" value="Rev_trsase/Diguanyl_cyclase"/>
</dbReference>
<dbReference type="InterPro" id="IPR001126">
    <property type="entry name" value="UmuC"/>
</dbReference>
<dbReference type="NCBIfam" id="NF002677">
    <property type="entry name" value="PRK02406.1"/>
    <property type="match status" value="1"/>
</dbReference>
<dbReference type="PANTHER" id="PTHR11076:SF33">
    <property type="entry name" value="DNA POLYMERASE KAPPA"/>
    <property type="match status" value="1"/>
</dbReference>
<dbReference type="PANTHER" id="PTHR11076">
    <property type="entry name" value="DNA REPAIR POLYMERASE UMUC / TRANSFERASE FAMILY MEMBER"/>
    <property type="match status" value="1"/>
</dbReference>
<dbReference type="Pfam" id="PF00817">
    <property type="entry name" value="IMS"/>
    <property type="match status" value="1"/>
</dbReference>
<dbReference type="Pfam" id="PF11799">
    <property type="entry name" value="IMS_C"/>
    <property type="match status" value="1"/>
</dbReference>
<dbReference type="Pfam" id="PF11798">
    <property type="entry name" value="IMS_HHH"/>
    <property type="match status" value="1"/>
</dbReference>
<dbReference type="SUPFAM" id="SSF56672">
    <property type="entry name" value="DNA/RNA polymerases"/>
    <property type="match status" value="1"/>
</dbReference>
<dbReference type="SUPFAM" id="SSF100879">
    <property type="entry name" value="Lesion bypass DNA polymerase (Y-family), little finger domain"/>
    <property type="match status" value="1"/>
</dbReference>
<dbReference type="PROSITE" id="PS50173">
    <property type="entry name" value="UMUC"/>
    <property type="match status" value="1"/>
</dbReference>
<comment type="function">
    <text evidence="1">Poorly processive, error-prone DNA polymerase involved in untargeted mutagenesis. Copies undamaged DNA at stalled replication forks, which arise in vivo from mismatched or misaligned primer ends. These misaligned primers can be extended by PolIV. Exhibits no 3'-5' exonuclease (proofreading) activity. May be involved in translesional synthesis.</text>
</comment>
<comment type="catalytic activity">
    <reaction evidence="1">
        <text>DNA(n) + a 2'-deoxyribonucleoside 5'-triphosphate = DNA(n+1) + diphosphate</text>
        <dbReference type="Rhea" id="RHEA:22508"/>
        <dbReference type="Rhea" id="RHEA-COMP:17339"/>
        <dbReference type="Rhea" id="RHEA-COMP:17340"/>
        <dbReference type="ChEBI" id="CHEBI:33019"/>
        <dbReference type="ChEBI" id="CHEBI:61560"/>
        <dbReference type="ChEBI" id="CHEBI:173112"/>
        <dbReference type="EC" id="2.7.7.7"/>
    </reaction>
</comment>
<comment type="cofactor">
    <cofactor evidence="1">
        <name>Mg(2+)</name>
        <dbReference type="ChEBI" id="CHEBI:18420"/>
    </cofactor>
    <text evidence="1">Binds 2 magnesium ions per subunit.</text>
</comment>
<comment type="subunit">
    <text evidence="1">Monomer.</text>
</comment>
<comment type="subcellular location">
    <subcellularLocation>
        <location evidence="1">Cytoplasm</location>
    </subcellularLocation>
</comment>
<comment type="similarity">
    <text evidence="1">Belongs to the DNA polymerase type-Y family.</text>
</comment>
<comment type="sequence caution" evidence="3">
    <conflict type="erroneous initiation">
        <sequence resource="EMBL-CDS" id="AAG19429"/>
    </conflict>
</comment>
<keyword id="KW-0963">Cytoplasm</keyword>
<keyword id="KW-0227">DNA damage</keyword>
<keyword id="KW-0234">DNA repair</keyword>
<keyword id="KW-0235">DNA replication</keyword>
<keyword id="KW-0238">DNA-binding</keyword>
<keyword id="KW-0239">DNA-directed DNA polymerase</keyword>
<keyword id="KW-0460">Magnesium</keyword>
<keyword id="KW-0479">Metal-binding</keyword>
<keyword id="KW-0515">Mutator protein</keyword>
<keyword id="KW-0548">Nucleotidyltransferase</keyword>
<keyword id="KW-1185">Reference proteome</keyword>
<keyword id="KW-0808">Transferase</keyword>
<sequence length="411" mass="43492">MPAGERLPGAPAREERIVVHVDMDCFYASCERRREPALRGAPVVVGMGYEPDQTVGAVATASYEAREYGVESAQAISAALERLPRKADAPDASAAGYYRPVDMAYYESVSESVSEILHGLGDPVREVSIDEAYLDVTDRTAWDVAAGFGRHIKQRIARSVGVPASVGIAPDMSTAKLASDHEKPDGLVVVPPESVQSFLAPLDVADLHGVGPVHARALRERGIETVGELADADPYVLEAAFGERGREFHRRARGADSRPVEPRGKPKSLSRESSFDGATESFDRVREQAAALSGAVADRASRTNASYRTIGVKVVTPPYDVQTRAESLPGPVDDPALLEAVSQSLLDEFEGAAVRKVGVRVSNLVFSEREQATLAGFSGDETGDGGGHEGGACGGAGRGSCGGQTTLDEFT</sequence>
<evidence type="ECO:0000255" key="1">
    <source>
        <dbReference type="HAMAP-Rule" id="MF_01113"/>
    </source>
</evidence>
<evidence type="ECO:0000256" key="2">
    <source>
        <dbReference type="SAM" id="MobiDB-lite"/>
    </source>
</evidence>
<evidence type="ECO:0000305" key="3"/>
<name>DPO4_HALSA</name>
<gene>
    <name evidence="1" type="primary">dbh</name>
    <name type="ordered locus">VNG_1014G</name>
</gene>
<organism>
    <name type="scientific">Halobacterium salinarum (strain ATCC 700922 / JCM 11081 / NRC-1)</name>
    <name type="common">Halobacterium halobium</name>
    <dbReference type="NCBI Taxonomy" id="64091"/>
    <lineage>
        <taxon>Archaea</taxon>
        <taxon>Methanobacteriati</taxon>
        <taxon>Methanobacteriota</taxon>
        <taxon>Stenosarchaea group</taxon>
        <taxon>Halobacteria</taxon>
        <taxon>Halobacteriales</taxon>
        <taxon>Halobacteriaceae</taxon>
        <taxon>Halobacterium</taxon>
        <taxon>Halobacterium salinarum NRC-34001</taxon>
    </lineage>
</organism>
<proteinExistence type="inferred from homology"/>
<protein>
    <recommendedName>
        <fullName evidence="1">DNA polymerase IV</fullName>
        <shortName evidence="1">Pol IV</shortName>
        <ecNumber evidence="1">2.7.7.7</ecNumber>
    </recommendedName>
</protein>